<name>RL27_CLOPE</name>
<keyword id="KW-1185">Reference proteome</keyword>
<keyword id="KW-0687">Ribonucleoprotein</keyword>
<keyword id="KW-0689">Ribosomal protein</keyword>
<accession>Q8XIJ1</accession>
<feature type="propeptide" id="PRO_0000459885" evidence="1">
    <location>
        <begin position="1"/>
        <end position="9"/>
    </location>
</feature>
<feature type="chain" id="PRO_0000181076" description="Large ribosomal subunit protein bL27">
    <location>
        <begin position="10"/>
        <end position="100"/>
    </location>
</feature>
<reference key="1">
    <citation type="journal article" date="2002" name="Proc. Natl. Acad. Sci. U.S.A.">
        <title>Complete genome sequence of Clostridium perfringens, an anaerobic flesh-eater.</title>
        <authorList>
            <person name="Shimizu T."/>
            <person name="Ohtani K."/>
            <person name="Hirakawa H."/>
            <person name="Ohshima K."/>
            <person name="Yamashita A."/>
            <person name="Shiba T."/>
            <person name="Ogasawara N."/>
            <person name="Hattori M."/>
            <person name="Kuhara S."/>
            <person name="Hayashi H."/>
        </authorList>
    </citation>
    <scope>NUCLEOTIDE SEQUENCE [LARGE SCALE GENOMIC DNA]</scope>
    <source>
        <strain>13 / Type A</strain>
    </source>
</reference>
<organism>
    <name type="scientific">Clostridium perfringens (strain 13 / Type A)</name>
    <dbReference type="NCBI Taxonomy" id="195102"/>
    <lineage>
        <taxon>Bacteria</taxon>
        <taxon>Bacillati</taxon>
        <taxon>Bacillota</taxon>
        <taxon>Clostridia</taxon>
        <taxon>Eubacteriales</taxon>
        <taxon>Clostridiaceae</taxon>
        <taxon>Clostridium</taxon>
    </lineage>
</organism>
<comment type="PTM">
    <text evidence="1">The N-terminus is cleaved by ribosomal processing cysteine protease Prp.</text>
</comment>
<comment type="similarity">
    <text evidence="2">Belongs to the bacterial ribosomal protein bL27 family.</text>
</comment>
<protein>
    <recommendedName>
        <fullName evidence="2">Large ribosomal subunit protein bL27</fullName>
    </recommendedName>
    <alternativeName>
        <fullName evidence="3">50S ribosomal protein L27</fullName>
    </alternativeName>
</protein>
<sequence length="100" mass="10824">MLKMNLQLFAHKKGVGSSKNGRDSEAKRLGVKCADGQFVLAGNILVRQRGTKIHPGANVGKGGDDTLFAKIDGVVKYERLGRDKKKASVYPVNVEEVIAE</sequence>
<evidence type="ECO:0000250" key="1">
    <source>
        <dbReference type="UniProtKB" id="Q2FXT0"/>
    </source>
</evidence>
<evidence type="ECO:0000255" key="2">
    <source>
        <dbReference type="HAMAP-Rule" id="MF_00539"/>
    </source>
</evidence>
<evidence type="ECO:0000305" key="3"/>
<proteinExistence type="inferred from homology"/>
<gene>
    <name evidence="2" type="primary">rpmA</name>
    <name type="ordered locus">CPE2128</name>
</gene>
<dbReference type="EMBL" id="BA000016">
    <property type="protein sequence ID" value="BAB81834.1"/>
    <property type="molecule type" value="Genomic_DNA"/>
</dbReference>
<dbReference type="RefSeq" id="WP_003454907.1">
    <property type="nucleotide sequence ID" value="NC_003366.1"/>
</dbReference>
<dbReference type="SMR" id="Q8XIJ1"/>
<dbReference type="STRING" id="195102.gene:10491398"/>
<dbReference type="GeneID" id="93001338"/>
<dbReference type="KEGG" id="cpe:CPE2128"/>
<dbReference type="HOGENOM" id="CLU_095424_4_0_9"/>
<dbReference type="Proteomes" id="UP000000818">
    <property type="component" value="Chromosome"/>
</dbReference>
<dbReference type="GO" id="GO:0022625">
    <property type="term" value="C:cytosolic large ribosomal subunit"/>
    <property type="evidence" value="ECO:0007669"/>
    <property type="project" value="TreeGrafter"/>
</dbReference>
<dbReference type="GO" id="GO:0003735">
    <property type="term" value="F:structural constituent of ribosome"/>
    <property type="evidence" value="ECO:0007669"/>
    <property type="project" value="InterPro"/>
</dbReference>
<dbReference type="GO" id="GO:0006412">
    <property type="term" value="P:translation"/>
    <property type="evidence" value="ECO:0007669"/>
    <property type="project" value="UniProtKB-UniRule"/>
</dbReference>
<dbReference type="FunFam" id="2.40.50.100:FF:000004">
    <property type="entry name" value="50S ribosomal protein L27"/>
    <property type="match status" value="1"/>
</dbReference>
<dbReference type="Gene3D" id="2.40.50.100">
    <property type="match status" value="1"/>
</dbReference>
<dbReference type="HAMAP" id="MF_00539">
    <property type="entry name" value="Ribosomal_bL27"/>
    <property type="match status" value="1"/>
</dbReference>
<dbReference type="InterPro" id="IPR001684">
    <property type="entry name" value="Ribosomal_bL27"/>
</dbReference>
<dbReference type="InterPro" id="IPR018261">
    <property type="entry name" value="Ribosomal_bL27_CS"/>
</dbReference>
<dbReference type="NCBIfam" id="TIGR00062">
    <property type="entry name" value="L27"/>
    <property type="match status" value="1"/>
</dbReference>
<dbReference type="PANTHER" id="PTHR15893:SF0">
    <property type="entry name" value="LARGE RIBOSOMAL SUBUNIT PROTEIN BL27M"/>
    <property type="match status" value="1"/>
</dbReference>
<dbReference type="PANTHER" id="PTHR15893">
    <property type="entry name" value="RIBOSOMAL PROTEIN L27"/>
    <property type="match status" value="1"/>
</dbReference>
<dbReference type="Pfam" id="PF01016">
    <property type="entry name" value="Ribosomal_L27"/>
    <property type="match status" value="1"/>
</dbReference>
<dbReference type="PRINTS" id="PR00063">
    <property type="entry name" value="RIBOSOMALL27"/>
</dbReference>
<dbReference type="SUPFAM" id="SSF110324">
    <property type="entry name" value="Ribosomal L27 protein-like"/>
    <property type="match status" value="1"/>
</dbReference>
<dbReference type="PROSITE" id="PS00831">
    <property type="entry name" value="RIBOSOMAL_L27"/>
    <property type="match status" value="1"/>
</dbReference>